<feature type="signal peptide" evidence="2">
    <location>
        <begin position="1"/>
        <end position="21"/>
    </location>
</feature>
<feature type="propeptide" id="PRO_0000452218" evidence="1">
    <location>
        <begin position="22"/>
        <end position="24"/>
    </location>
</feature>
<feature type="peptide" id="PRO_0000452219" description="Peptide HSTX-III" evidence="1">
    <location>
        <begin position="25"/>
        <end position="47"/>
    </location>
</feature>
<feature type="modified residue" description="Tyrosine amide" evidence="1">
    <location>
        <position position="47"/>
    </location>
</feature>
<feature type="disulfide bond" evidence="1">
    <location>
        <begin position="26"/>
        <end position="38"/>
    </location>
</feature>
<feature type="disulfide bond" evidence="1">
    <location>
        <begin position="32"/>
        <end position="43"/>
    </location>
</feature>
<proteinExistence type="inferred from homology"/>
<organism>
    <name type="scientific">Haemadipsa sylvestris</name>
    <name type="common">Indian leech</name>
    <dbReference type="NCBI Taxonomy" id="13555"/>
    <lineage>
        <taxon>Eukaryota</taxon>
        <taxon>Metazoa</taxon>
        <taxon>Spiralia</taxon>
        <taxon>Lophotrochozoa</taxon>
        <taxon>Annelida</taxon>
        <taxon>Clitellata</taxon>
        <taxon>Hirudinea</taxon>
        <taxon>Hirudinida</taxon>
        <taxon>Hirudiniformes</taxon>
        <taxon>Haemadipsidae</taxon>
        <taxon>Haemadipsa</taxon>
    </lineage>
</organism>
<accession>P0DUG6</accession>
<dbReference type="GO" id="GO:0005576">
    <property type="term" value="C:extracellular region"/>
    <property type="evidence" value="ECO:0007669"/>
    <property type="project" value="UniProtKB-SubCell"/>
</dbReference>
<protein>
    <recommendedName>
        <fullName evidence="3">Peptide HSTX-III</fullName>
    </recommendedName>
</protein>
<comment type="function">
    <text evidence="1">Leech salivary gland peptide with unknown function.</text>
</comment>
<comment type="subcellular location">
    <subcellularLocation>
        <location evidence="1">Secreted</location>
    </subcellularLocation>
</comment>
<comment type="tissue specificity">
    <text evidence="1">Expressed in salivary glands. Highly expressed in the head, body and tail with a 2-3-fold higher expression in the head.</text>
</comment>
<comment type="miscellaneous">
    <text evidence="1">Does not show effect on voltage-gated calcium channels, potassium channels, and tetrodotoxin-sensitive sodium channels. Does not show activity on Nav1.7/SCN9A, and shows very weak activity on cation channel TRPA1.</text>
</comment>
<comment type="similarity">
    <text evidence="4">Belongs to the annelide toxin family.</text>
</comment>
<keyword id="KW-0027">Amidation</keyword>
<keyword id="KW-1015">Disulfide bond</keyword>
<keyword id="KW-0964">Secreted</keyword>
<keyword id="KW-0732">Signal</keyword>
<reference key="1">
    <citation type="journal article" date="2018" name="Front. Pharmacol.">
        <title>Novel sodium channel inhibitor from leeches.</title>
        <authorList>
            <person name="Wang G."/>
            <person name="Long C."/>
            <person name="Liu W."/>
            <person name="Xu C."/>
            <person name="Zhang M."/>
            <person name="Li Q."/>
            <person name="Lu Q."/>
            <person name="Meng P."/>
            <person name="Li D."/>
            <person name="Rong M."/>
            <person name="Sun Z."/>
            <person name="Luo X."/>
            <person name="Lai R."/>
        </authorList>
    </citation>
    <scope>NUCLEOTIDE SEQUENCE [MRNA]</scope>
    <source>
        <tissue>Salivary gland</tissue>
    </source>
</reference>
<sequence>MRTLLVFLLLAILVAVLIGNVQVEACKQGIDCKYPRGCIEGVCEPLYG</sequence>
<name>HSTX3_HAESL</name>
<evidence type="ECO:0000250" key="1">
    <source>
        <dbReference type="UniProtKB" id="A0A2L1DGG0"/>
    </source>
</evidence>
<evidence type="ECO:0000255" key="2"/>
<evidence type="ECO:0000303" key="3">
    <source>
    </source>
</evidence>
<evidence type="ECO:0000305" key="4"/>